<comment type="similarity">
    <text evidence="2">Belongs to the ANKRD39 family.</text>
</comment>
<comment type="sequence caution" evidence="2">
    <conflict type="frameshift">
        <sequence resource="EMBL-CDS" id="AAF36120"/>
    </conflict>
</comment>
<comment type="sequence caution" evidence="2">
    <conflict type="erroneous initiation">
        <sequence resource="EMBL-CDS" id="BAD92604"/>
    </conflict>
</comment>
<keyword id="KW-0040">ANK repeat</keyword>
<keyword id="KW-0597">Phosphoprotein</keyword>
<keyword id="KW-1267">Proteomics identification</keyword>
<keyword id="KW-1185">Reference proteome</keyword>
<keyword id="KW-0677">Repeat</keyword>
<name>ANR39_HUMAN</name>
<sequence length="183" mass="19651">MATPRPCADGPCCSHPSAVLGVQQTLEEMDFERGIWSAALNGDLGRVKHLIQKAEDPSQPDSAGYTALHYASRNGHYAVCQFLLESGAKCDAQTHGGATALHRASYCGHTEIARLLLSHGSNPRVVDDDGMTSLHKAAERGHGDICSLLLQHSPALKAIRDRKARLACDLLPCNSDLRDLLSS</sequence>
<dbReference type="EMBL" id="AF151034">
    <property type="protein sequence ID" value="AAF36120.1"/>
    <property type="status" value="ALT_FRAME"/>
    <property type="molecule type" value="mRNA"/>
</dbReference>
<dbReference type="EMBL" id="AB209367">
    <property type="protein sequence ID" value="BAD92604.1"/>
    <property type="status" value="ALT_INIT"/>
    <property type="molecule type" value="mRNA"/>
</dbReference>
<dbReference type="EMBL" id="AC092636">
    <property type="protein sequence ID" value="AAY14966.1"/>
    <property type="molecule type" value="Genomic_DNA"/>
</dbReference>
<dbReference type="EMBL" id="BC031303">
    <property type="protein sequence ID" value="AAH31303.1"/>
    <property type="molecule type" value="mRNA"/>
</dbReference>
<dbReference type="CCDS" id="CCDS2028.1"/>
<dbReference type="RefSeq" id="NP_057550.3">
    <property type="nucleotide sequence ID" value="NM_016466.5"/>
</dbReference>
<dbReference type="SMR" id="Q53RE8"/>
<dbReference type="BioGRID" id="119400">
    <property type="interactions" value="71"/>
</dbReference>
<dbReference type="FunCoup" id="Q53RE8">
    <property type="interactions" value="38"/>
</dbReference>
<dbReference type="IntAct" id="Q53RE8">
    <property type="interactions" value="65"/>
</dbReference>
<dbReference type="MINT" id="Q53RE8"/>
<dbReference type="STRING" id="9606.ENSP00000377170"/>
<dbReference type="iPTMnet" id="Q53RE8"/>
<dbReference type="PhosphoSitePlus" id="Q53RE8"/>
<dbReference type="BioMuta" id="ANKRD39"/>
<dbReference type="DMDM" id="74740664"/>
<dbReference type="jPOST" id="Q53RE8"/>
<dbReference type="MassIVE" id="Q53RE8"/>
<dbReference type="PaxDb" id="9606-ENSP00000377170"/>
<dbReference type="PeptideAtlas" id="Q53RE8"/>
<dbReference type="ProteomicsDB" id="62523"/>
<dbReference type="Pumba" id="Q53RE8"/>
<dbReference type="Antibodypedia" id="47508">
    <property type="antibodies" value="74 antibodies from 17 providers"/>
</dbReference>
<dbReference type="DNASU" id="51239"/>
<dbReference type="Ensembl" id="ENST00000393537.5">
    <property type="protein sequence ID" value="ENSP00000377170.4"/>
    <property type="gene ID" value="ENSG00000213337.9"/>
</dbReference>
<dbReference type="Ensembl" id="ENST00000443120.5">
    <property type="protein sequence ID" value="ENSP00000398321.1"/>
    <property type="gene ID" value="ENSG00000213337.9"/>
</dbReference>
<dbReference type="GeneID" id="51239"/>
<dbReference type="KEGG" id="hsa:51239"/>
<dbReference type="MANE-Select" id="ENST00000393537.5">
    <property type="protein sequence ID" value="ENSP00000377170.4"/>
    <property type="RefSeq nucleotide sequence ID" value="NM_016466.6"/>
    <property type="RefSeq protein sequence ID" value="NP_057550.3"/>
</dbReference>
<dbReference type="UCSC" id="uc002sxd.5">
    <property type="organism name" value="human"/>
</dbReference>
<dbReference type="AGR" id="HGNC:28640"/>
<dbReference type="CTD" id="51239"/>
<dbReference type="DisGeNET" id="51239"/>
<dbReference type="GeneCards" id="ANKRD39"/>
<dbReference type="HGNC" id="HGNC:28640">
    <property type="gene designation" value="ANKRD39"/>
</dbReference>
<dbReference type="HPA" id="ENSG00000213337">
    <property type="expression patterns" value="Low tissue specificity"/>
</dbReference>
<dbReference type="neXtProt" id="NX_Q53RE8"/>
<dbReference type="OpenTargets" id="ENSG00000213337"/>
<dbReference type="PharmGKB" id="PA142672606"/>
<dbReference type="VEuPathDB" id="HostDB:ENSG00000213337"/>
<dbReference type="eggNOG" id="KOG0504">
    <property type="taxonomic scope" value="Eukaryota"/>
</dbReference>
<dbReference type="GeneTree" id="ENSGT00940000160547"/>
<dbReference type="HOGENOM" id="CLU_000134_35_1_1"/>
<dbReference type="InParanoid" id="Q53RE8"/>
<dbReference type="OMA" id="YCGHLNV"/>
<dbReference type="OrthoDB" id="539213at2759"/>
<dbReference type="PAN-GO" id="Q53RE8">
    <property type="GO annotations" value="4 GO annotations based on evolutionary models"/>
</dbReference>
<dbReference type="PhylomeDB" id="Q53RE8"/>
<dbReference type="TreeFam" id="TF326597"/>
<dbReference type="PathwayCommons" id="Q53RE8"/>
<dbReference type="SignaLink" id="Q53RE8"/>
<dbReference type="BioGRID-ORCS" id="51239">
    <property type="hits" value="28 hits in 1155 CRISPR screens"/>
</dbReference>
<dbReference type="ChiTaRS" id="ANKRD39">
    <property type="organism name" value="human"/>
</dbReference>
<dbReference type="GenomeRNAi" id="51239"/>
<dbReference type="Pharos" id="Q53RE8">
    <property type="development level" value="Tdark"/>
</dbReference>
<dbReference type="PRO" id="PR:Q53RE8"/>
<dbReference type="Proteomes" id="UP000005640">
    <property type="component" value="Chromosome 2"/>
</dbReference>
<dbReference type="RNAct" id="Q53RE8">
    <property type="molecule type" value="protein"/>
</dbReference>
<dbReference type="Bgee" id="ENSG00000213337">
    <property type="expression patterns" value="Expressed in hindlimb stylopod muscle and 141 other cell types or tissues"/>
</dbReference>
<dbReference type="Gene3D" id="1.25.40.20">
    <property type="entry name" value="Ankyrin repeat-containing domain"/>
    <property type="match status" value="2"/>
</dbReference>
<dbReference type="InterPro" id="IPR002110">
    <property type="entry name" value="Ankyrin_rpt"/>
</dbReference>
<dbReference type="InterPro" id="IPR036770">
    <property type="entry name" value="Ankyrin_rpt-contain_sf"/>
</dbReference>
<dbReference type="PANTHER" id="PTHR24171">
    <property type="entry name" value="ANKYRIN REPEAT DOMAIN-CONTAINING PROTEIN 39-RELATED"/>
    <property type="match status" value="1"/>
</dbReference>
<dbReference type="Pfam" id="PF12796">
    <property type="entry name" value="Ank_2"/>
    <property type="match status" value="1"/>
</dbReference>
<dbReference type="Pfam" id="PF13637">
    <property type="entry name" value="Ank_4"/>
    <property type="match status" value="1"/>
</dbReference>
<dbReference type="PRINTS" id="PR01415">
    <property type="entry name" value="ANKYRIN"/>
</dbReference>
<dbReference type="SMART" id="SM00248">
    <property type="entry name" value="ANK"/>
    <property type="match status" value="4"/>
</dbReference>
<dbReference type="SUPFAM" id="SSF48403">
    <property type="entry name" value="Ankyrin repeat"/>
    <property type="match status" value="1"/>
</dbReference>
<dbReference type="PROSITE" id="PS50297">
    <property type="entry name" value="ANK_REP_REGION"/>
    <property type="match status" value="1"/>
</dbReference>
<dbReference type="PROSITE" id="PS50088">
    <property type="entry name" value="ANK_REPEAT"/>
    <property type="match status" value="3"/>
</dbReference>
<reference key="1">
    <citation type="journal article" date="2000" name="Genome Res.">
        <title>Cloning and functional analysis of cDNAs with open reading frames for 300 previously undefined genes expressed in CD34+ hematopoietic stem/progenitor cells.</title>
        <authorList>
            <person name="Zhang Q.-H."/>
            <person name="Ye M."/>
            <person name="Wu X.-Y."/>
            <person name="Ren S.-X."/>
            <person name="Zhao M."/>
            <person name="Zhao C.-J."/>
            <person name="Fu G."/>
            <person name="Shen Y."/>
            <person name="Fan H.-Y."/>
            <person name="Lu G."/>
            <person name="Zhong M."/>
            <person name="Xu X.-R."/>
            <person name="Han Z.-G."/>
            <person name="Zhang J.-W."/>
            <person name="Tao J."/>
            <person name="Huang Q.-H."/>
            <person name="Zhou J."/>
            <person name="Hu G.-X."/>
            <person name="Gu J."/>
            <person name="Chen S.-J."/>
            <person name="Chen Z."/>
        </authorList>
    </citation>
    <scope>NUCLEOTIDE SEQUENCE [LARGE SCALE MRNA]</scope>
    <source>
        <tissue>Umbilical cord blood</tissue>
    </source>
</reference>
<reference key="2">
    <citation type="submission" date="2005-03" db="EMBL/GenBank/DDBJ databases">
        <authorList>
            <person name="Totoki Y."/>
            <person name="Toyoda A."/>
            <person name="Takeda T."/>
            <person name="Sakaki Y."/>
            <person name="Tanaka A."/>
            <person name="Yokoyama S."/>
            <person name="Ohara O."/>
            <person name="Nagase T."/>
            <person name="Kikuno R.F."/>
        </authorList>
    </citation>
    <scope>NUCLEOTIDE SEQUENCE [LARGE SCALE MRNA]</scope>
    <source>
        <tissue>Brain</tissue>
    </source>
</reference>
<reference key="3">
    <citation type="journal article" date="2005" name="Nature">
        <title>Generation and annotation of the DNA sequences of human chromosomes 2 and 4.</title>
        <authorList>
            <person name="Hillier L.W."/>
            <person name="Graves T.A."/>
            <person name="Fulton R.S."/>
            <person name="Fulton L.A."/>
            <person name="Pepin K.H."/>
            <person name="Minx P."/>
            <person name="Wagner-McPherson C."/>
            <person name="Layman D."/>
            <person name="Wylie K."/>
            <person name="Sekhon M."/>
            <person name="Becker M.C."/>
            <person name="Fewell G.A."/>
            <person name="Delehaunty K.D."/>
            <person name="Miner T.L."/>
            <person name="Nash W.E."/>
            <person name="Kremitzki C."/>
            <person name="Oddy L."/>
            <person name="Du H."/>
            <person name="Sun H."/>
            <person name="Bradshaw-Cordum H."/>
            <person name="Ali J."/>
            <person name="Carter J."/>
            <person name="Cordes M."/>
            <person name="Harris A."/>
            <person name="Isak A."/>
            <person name="van Brunt A."/>
            <person name="Nguyen C."/>
            <person name="Du F."/>
            <person name="Courtney L."/>
            <person name="Kalicki J."/>
            <person name="Ozersky P."/>
            <person name="Abbott S."/>
            <person name="Armstrong J."/>
            <person name="Belter E.A."/>
            <person name="Caruso L."/>
            <person name="Cedroni M."/>
            <person name="Cotton M."/>
            <person name="Davidson T."/>
            <person name="Desai A."/>
            <person name="Elliott G."/>
            <person name="Erb T."/>
            <person name="Fronick C."/>
            <person name="Gaige T."/>
            <person name="Haakenson W."/>
            <person name="Haglund K."/>
            <person name="Holmes A."/>
            <person name="Harkins R."/>
            <person name="Kim K."/>
            <person name="Kruchowski S.S."/>
            <person name="Strong C.M."/>
            <person name="Grewal N."/>
            <person name="Goyea E."/>
            <person name="Hou S."/>
            <person name="Levy A."/>
            <person name="Martinka S."/>
            <person name="Mead K."/>
            <person name="McLellan M.D."/>
            <person name="Meyer R."/>
            <person name="Randall-Maher J."/>
            <person name="Tomlinson C."/>
            <person name="Dauphin-Kohlberg S."/>
            <person name="Kozlowicz-Reilly A."/>
            <person name="Shah N."/>
            <person name="Swearengen-Shahid S."/>
            <person name="Snider J."/>
            <person name="Strong J.T."/>
            <person name="Thompson J."/>
            <person name="Yoakum M."/>
            <person name="Leonard S."/>
            <person name="Pearman C."/>
            <person name="Trani L."/>
            <person name="Radionenko M."/>
            <person name="Waligorski J.E."/>
            <person name="Wang C."/>
            <person name="Rock S.M."/>
            <person name="Tin-Wollam A.-M."/>
            <person name="Maupin R."/>
            <person name="Latreille P."/>
            <person name="Wendl M.C."/>
            <person name="Yang S.-P."/>
            <person name="Pohl C."/>
            <person name="Wallis J.W."/>
            <person name="Spieth J."/>
            <person name="Bieri T.A."/>
            <person name="Berkowicz N."/>
            <person name="Nelson J.O."/>
            <person name="Osborne J."/>
            <person name="Ding L."/>
            <person name="Meyer R."/>
            <person name="Sabo A."/>
            <person name="Shotland Y."/>
            <person name="Sinha P."/>
            <person name="Wohldmann P.E."/>
            <person name="Cook L.L."/>
            <person name="Hickenbotham M.T."/>
            <person name="Eldred J."/>
            <person name="Williams D."/>
            <person name="Jones T.A."/>
            <person name="She X."/>
            <person name="Ciccarelli F.D."/>
            <person name="Izaurralde E."/>
            <person name="Taylor J."/>
            <person name="Schmutz J."/>
            <person name="Myers R.M."/>
            <person name="Cox D.R."/>
            <person name="Huang X."/>
            <person name="McPherson J.D."/>
            <person name="Mardis E.R."/>
            <person name="Clifton S.W."/>
            <person name="Warren W.C."/>
            <person name="Chinwalla A.T."/>
            <person name="Eddy S.R."/>
            <person name="Marra M.A."/>
            <person name="Ovcharenko I."/>
            <person name="Furey T.S."/>
            <person name="Miller W."/>
            <person name="Eichler E.E."/>
            <person name="Bork P."/>
            <person name="Suyama M."/>
            <person name="Torrents D."/>
            <person name="Waterston R.H."/>
            <person name="Wilson R.K."/>
        </authorList>
    </citation>
    <scope>NUCLEOTIDE SEQUENCE [LARGE SCALE GENOMIC DNA]</scope>
</reference>
<reference key="4">
    <citation type="journal article" date="2004" name="Genome Res.">
        <title>The status, quality, and expansion of the NIH full-length cDNA project: the Mammalian Gene Collection (MGC).</title>
        <authorList>
            <consortium name="The MGC Project Team"/>
        </authorList>
    </citation>
    <scope>NUCLEOTIDE SEQUENCE [LARGE SCALE MRNA]</scope>
    <scope>VARIANT THR-113</scope>
    <source>
        <tissue>Brain</tissue>
    </source>
</reference>
<reference key="5">
    <citation type="journal article" date="2008" name="Proc. Natl. Acad. Sci. U.S.A.">
        <title>A quantitative atlas of mitotic phosphorylation.</title>
        <authorList>
            <person name="Dephoure N."/>
            <person name="Zhou C."/>
            <person name="Villen J."/>
            <person name="Beausoleil S.A."/>
            <person name="Bakalarski C.E."/>
            <person name="Elledge S.J."/>
            <person name="Gygi S.P."/>
        </authorList>
    </citation>
    <scope>PHOSPHORYLATION [LARGE SCALE ANALYSIS] AT SER-153</scope>
    <scope>IDENTIFICATION BY MASS SPECTROMETRY [LARGE SCALE ANALYSIS]</scope>
    <source>
        <tissue>Cervix carcinoma</tissue>
    </source>
</reference>
<evidence type="ECO:0000269" key="1">
    <source>
    </source>
</evidence>
<evidence type="ECO:0000305" key="2"/>
<evidence type="ECO:0007744" key="3">
    <source>
    </source>
</evidence>
<gene>
    <name type="primary">ANKRD39</name>
    <name type="ORF">HSPC200</name>
</gene>
<accession>Q53RE8</accession>
<accession>Q59FU2</accession>
<accession>Q8N5X5</accession>
<accession>Q9P0S5</accession>
<proteinExistence type="evidence at protein level"/>
<organism>
    <name type="scientific">Homo sapiens</name>
    <name type="common">Human</name>
    <dbReference type="NCBI Taxonomy" id="9606"/>
    <lineage>
        <taxon>Eukaryota</taxon>
        <taxon>Metazoa</taxon>
        <taxon>Chordata</taxon>
        <taxon>Craniata</taxon>
        <taxon>Vertebrata</taxon>
        <taxon>Euteleostomi</taxon>
        <taxon>Mammalia</taxon>
        <taxon>Eutheria</taxon>
        <taxon>Euarchontoglires</taxon>
        <taxon>Primates</taxon>
        <taxon>Haplorrhini</taxon>
        <taxon>Catarrhini</taxon>
        <taxon>Hominidae</taxon>
        <taxon>Homo</taxon>
    </lineage>
</organism>
<protein>
    <recommendedName>
        <fullName>Ankyrin repeat domain-containing protein 39</fullName>
    </recommendedName>
</protein>
<feature type="chain" id="PRO_0000244366" description="Ankyrin repeat domain-containing protein 39">
    <location>
        <begin position="1"/>
        <end position="183"/>
    </location>
</feature>
<feature type="repeat" description="ANK 1">
    <location>
        <begin position="30"/>
        <end position="59"/>
    </location>
</feature>
<feature type="repeat" description="ANK 2">
    <location>
        <begin position="63"/>
        <end position="92"/>
    </location>
</feature>
<feature type="repeat" description="ANK 3">
    <location>
        <begin position="96"/>
        <end position="125"/>
    </location>
</feature>
<feature type="repeat" description="ANK 4">
    <location>
        <begin position="129"/>
        <end position="158"/>
    </location>
</feature>
<feature type="modified residue" description="Phosphoserine" evidence="3">
    <location>
        <position position="153"/>
    </location>
</feature>
<feature type="sequence variant" id="VAR_026905" description="In dbSNP:rs17852947." evidence="1">
    <original>A</original>
    <variation>T</variation>
    <location>
        <position position="113"/>
    </location>
</feature>
<feature type="sequence conflict" description="In Ref. 1; AAF36120." evidence="2" ref="1">
    <original>P</original>
    <variation>L</variation>
    <location>
        <position position="4"/>
    </location>
</feature>